<protein>
    <recommendedName>
        <fullName evidence="1">Nucleotide-binding protein BURPS1106A_0593</fullName>
    </recommendedName>
</protein>
<reference key="1">
    <citation type="journal article" date="2010" name="Genome Biol. Evol.">
        <title>Continuing evolution of Burkholderia mallei through genome reduction and large-scale rearrangements.</title>
        <authorList>
            <person name="Losada L."/>
            <person name="Ronning C.M."/>
            <person name="DeShazer D."/>
            <person name="Woods D."/>
            <person name="Fedorova N."/>
            <person name="Kim H.S."/>
            <person name="Shabalina S.A."/>
            <person name="Pearson T.R."/>
            <person name="Brinkac L."/>
            <person name="Tan P."/>
            <person name="Nandi T."/>
            <person name="Crabtree J."/>
            <person name="Badger J."/>
            <person name="Beckstrom-Sternberg S."/>
            <person name="Saqib M."/>
            <person name="Schutzer S.E."/>
            <person name="Keim P."/>
            <person name="Nierman W.C."/>
        </authorList>
    </citation>
    <scope>NUCLEOTIDE SEQUENCE [LARGE SCALE GENOMIC DNA]</scope>
    <source>
        <strain>1106a</strain>
    </source>
</reference>
<dbReference type="EMBL" id="CP000572">
    <property type="protein sequence ID" value="ABN90485.1"/>
    <property type="molecule type" value="Genomic_DNA"/>
</dbReference>
<dbReference type="SMR" id="A3NRA4"/>
<dbReference type="KEGG" id="bpl:BURPS1106A_0593"/>
<dbReference type="HOGENOM" id="CLU_059558_1_1_4"/>
<dbReference type="Proteomes" id="UP000006738">
    <property type="component" value="Chromosome I"/>
</dbReference>
<dbReference type="GO" id="GO:0005524">
    <property type="term" value="F:ATP binding"/>
    <property type="evidence" value="ECO:0007669"/>
    <property type="project" value="UniProtKB-UniRule"/>
</dbReference>
<dbReference type="GO" id="GO:0005525">
    <property type="term" value="F:GTP binding"/>
    <property type="evidence" value="ECO:0007669"/>
    <property type="project" value="UniProtKB-UniRule"/>
</dbReference>
<dbReference type="Gene3D" id="3.40.50.300">
    <property type="entry name" value="P-loop containing nucleotide triphosphate hydrolases"/>
    <property type="match status" value="1"/>
</dbReference>
<dbReference type="HAMAP" id="MF_00636">
    <property type="entry name" value="RapZ_like"/>
    <property type="match status" value="1"/>
</dbReference>
<dbReference type="InterPro" id="IPR027417">
    <property type="entry name" value="P-loop_NTPase"/>
</dbReference>
<dbReference type="InterPro" id="IPR005337">
    <property type="entry name" value="RapZ-like"/>
</dbReference>
<dbReference type="InterPro" id="IPR053930">
    <property type="entry name" value="RapZ-like_N"/>
</dbReference>
<dbReference type="InterPro" id="IPR053931">
    <property type="entry name" value="RapZ_C"/>
</dbReference>
<dbReference type="NCBIfam" id="NF003828">
    <property type="entry name" value="PRK05416.1"/>
    <property type="match status" value="1"/>
</dbReference>
<dbReference type="PANTHER" id="PTHR30448">
    <property type="entry name" value="RNASE ADAPTER PROTEIN RAPZ"/>
    <property type="match status" value="1"/>
</dbReference>
<dbReference type="PANTHER" id="PTHR30448:SF0">
    <property type="entry name" value="RNASE ADAPTER PROTEIN RAPZ"/>
    <property type="match status" value="1"/>
</dbReference>
<dbReference type="Pfam" id="PF22740">
    <property type="entry name" value="PapZ_C"/>
    <property type="match status" value="1"/>
</dbReference>
<dbReference type="Pfam" id="PF03668">
    <property type="entry name" value="RapZ-like_N"/>
    <property type="match status" value="1"/>
</dbReference>
<dbReference type="PIRSF" id="PIRSF005052">
    <property type="entry name" value="P-loopkin"/>
    <property type="match status" value="1"/>
</dbReference>
<dbReference type="SUPFAM" id="SSF52540">
    <property type="entry name" value="P-loop containing nucleoside triphosphate hydrolases"/>
    <property type="match status" value="1"/>
</dbReference>
<proteinExistence type="inferred from homology"/>
<accession>A3NRA4</accession>
<evidence type="ECO:0000255" key="1">
    <source>
        <dbReference type="HAMAP-Rule" id="MF_00636"/>
    </source>
</evidence>
<keyword id="KW-0067">ATP-binding</keyword>
<keyword id="KW-0342">GTP-binding</keyword>
<keyword id="KW-0547">Nucleotide-binding</keyword>
<gene>
    <name type="ordered locus">BURPS1106A_0593</name>
</gene>
<sequence length="297" mass="33195">MRIVLITGISGSGKSVALNALEDAGYYCVDNLPPHVLPELARYLAHEGQNRLAVAIDARSSASLDEMPGLIRALSREHDVRVLFLNASTQALIQRFSETRRRHPLSGSPSHDADVGLLVSLEEAIERERELVAPLAEFGHQIDTSNLRANVLRTWVKRFIEQKNDDLVLMFESFGFKRGVPLDADFMFDVRALPNPYYDHELRPLTGLDQPVVAFLDALPVVHQMLDDIETFLVKWLPHFREDNRSYLTVAIGCTGGQHRSVFLAETLAARLSRQASVIVRHRDAPVAVDASSRLVT</sequence>
<comment type="function">
    <text evidence="1">Displays ATPase and GTPase activities.</text>
</comment>
<comment type="similarity">
    <text evidence="1">Belongs to the RapZ-like family.</text>
</comment>
<feature type="chain" id="PRO_1000056812" description="Nucleotide-binding protein BURPS1106A_0593">
    <location>
        <begin position="1"/>
        <end position="297"/>
    </location>
</feature>
<feature type="binding site" evidence="1">
    <location>
        <begin position="8"/>
        <end position="15"/>
    </location>
    <ligand>
        <name>ATP</name>
        <dbReference type="ChEBI" id="CHEBI:30616"/>
    </ligand>
</feature>
<feature type="binding site" evidence="1">
    <location>
        <begin position="57"/>
        <end position="60"/>
    </location>
    <ligand>
        <name>GTP</name>
        <dbReference type="ChEBI" id="CHEBI:37565"/>
    </ligand>
</feature>
<name>Y593_BURP0</name>
<organism>
    <name type="scientific">Burkholderia pseudomallei (strain 1106a)</name>
    <dbReference type="NCBI Taxonomy" id="357348"/>
    <lineage>
        <taxon>Bacteria</taxon>
        <taxon>Pseudomonadati</taxon>
        <taxon>Pseudomonadota</taxon>
        <taxon>Betaproteobacteria</taxon>
        <taxon>Burkholderiales</taxon>
        <taxon>Burkholderiaceae</taxon>
        <taxon>Burkholderia</taxon>
        <taxon>pseudomallei group</taxon>
    </lineage>
</organism>